<organism evidence="11">
    <name type="scientific">Caenorhabditis elegans</name>
    <dbReference type="NCBI Taxonomy" id="6239"/>
    <lineage>
        <taxon>Eukaryota</taxon>
        <taxon>Metazoa</taxon>
        <taxon>Ecdysozoa</taxon>
        <taxon>Nematoda</taxon>
        <taxon>Chromadorea</taxon>
        <taxon>Rhabditida</taxon>
        <taxon>Rhabditina</taxon>
        <taxon>Rhabditomorpha</taxon>
        <taxon>Rhabditoidea</taxon>
        <taxon>Rhabditidae</taxon>
        <taxon>Peloderinae</taxon>
        <taxon>Caenorhabditis</taxon>
    </lineage>
</organism>
<name>ATX2_CAEEL</name>
<evidence type="ECO:0000255" key="1">
    <source>
        <dbReference type="PROSITE-ProRule" id="PRU01346"/>
    </source>
</evidence>
<evidence type="ECO:0000256" key="2">
    <source>
        <dbReference type="SAM" id="MobiDB-lite"/>
    </source>
</evidence>
<evidence type="ECO:0000269" key="3">
    <source>
    </source>
</evidence>
<evidence type="ECO:0000269" key="4">
    <source>
    </source>
</evidence>
<evidence type="ECO:0000269" key="5">
    <source>
    </source>
</evidence>
<evidence type="ECO:0000269" key="6">
    <source>
    </source>
</evidence>
<evidence type="ECO:0000269" key="7">
    <source>
    </source>
</evidence>
<evidence type="ECO:0000303" key="8">
    <source>
    </source>
</evidence>
<evidence type="ECO:0000305" key="9"/>
<evidence type="ECO:0000312" key="10">
    <source>
        <dbReference type="EMBL" id="AAS78587.1"/>
    </source>
</evidence>
<evidence type="ECO:0000312" key="11">
    <source>
        <dbReference type="Proteomes" id="UP000001940"/>
    </source>
</evidence>
<evidence type="ECO:0000312" key="12">
    <source>
        <dbReference type="WormBase" id="D2045.1a"/>
    </source>
</evidence>
<evidence type="ECO:0000312" key="13">
    <source>
        <dbReference type="WormBase" id="D2045.1b"/>
    </source>
</evidence>
<evidence type="ECO:0000312" key="14">
    <source>
        <dbReference type="WormBase" id="D2045.1c"/>
    </source>
</evidence>
<comment type="function">
    <text evidence="3 4 5 6 7">Probable RNA-binding protein that negatively regulates the translation of targets (PubMed:15342467, PubMed:27689799). Functions with RNA-binding protein szy-20 to ensure embryonic cell division, and to this end, plays a role in the regulation of centrosome assembly, position and size, and in astral microtubule outgrowth and nucleation (PubMed:27689799). Required for gonad development, germ cell proliferation and for the production of oocytes (PubMed:11303786, PubMed:15342467, PubMed:15514056). Regulates whole body growth and fat accumulation in response to food availability, and this may be through the mTOR pathway, upstream of daf-15 and rheb-1 (PubMed:27457958).</text>
</comment>
<comment type="subunit">
    <text evidence="4 6 7">Interacts (via C-terminus) with szy-20 (via C-terminus); the interaction is RNA independent (PubMed:27689799). Interacts with pab-1 (PubMed:15342467). Interacts with gdi-1 (PubMed:27457958).</text>
</comment>
<comment type="subcellular location">
    <subcellularLocation>
        <location evidence="4 6 7">Cytoplasm</location>
    </subcellularLocation>
    <subcellularLocation>
        <location evidence="6">Nucleus</location>
    </subcellularLocation>
    <text evidence="7">Co-localizes with szy-20 and pab-1 in the cytoplasm.</text>
</comment>
<comment type="alternative products">
    <event type="alternative splicing"/>
    <isoform>
        <id>G5ED29-1</id>
        <name evidence="12">a</name>
        <sequence type="displayed"/>
    </isoform>
    <isoform>
        <id>G5ED29-2</id>
        <name evidence="13">b</name>
        <sequence type="described" ref="VSP_058818"/>
    </isoform>
    <isoform>
        <id>G5ED29-3</id>
        <name evidence="14">c</name>
        <sequence type="described" ref="VSP_058819 VSP_058820"/>
    </isoform>
</comment>
<comment type="tissue specificity">
    <text evidence="3 4">Expressed in the central nervous system, dorsal and ventral nerve cord, intestinal lining and body-wall muscle (PubMed:11303786). Expressed in the gonad (PubMed:15342467).</text>
</comment>
<comment type="developmental stage">
    <text evidence="3">Expressed in 4-cell stage embryos and during larval stages L3 and L4.</text>
</comment>
<comment type="domain">
    <text evidence="7">The C-terminal part is necessary for interaction with szy-20.</text>
</comment>
<comment type="disruption phenotype">
    <text evidence="3 4 5 6 7">Sterile, however growth rate, size and fat accumulation are not altered in response to a restricted diet in contrast to wild-type animals under the same conditions (PubMed:27457958). RNAi-mediated knockdown results in embryonic lethality as a result of cell division defects at the one-cell stage (PubMed:27689799). Cell division defects include polar body extrusion failure, abnormal spindle positioning, chromosome missegregation and cytokinesis failure (PubMed:27689799). One-cell embryos also have enlarged centrosomes and microtubule growth defects characterized by increased microtubule nucleation, short astral microtubules and elevated expression levels of zyg-1, which is involved in centriole duplication, and tbg-1, a pericentriolar materials factor involved in microtubule nucleation (PubMed:27689799). In other contrasting studies, RNAi-mediated knockdown at the L4 stage of larval development, results in the initial production of viable progeny, that with continued RNAi exposure, grow into sterile adults in which germ cells have a proliferation defect that leads to a reduced sized gonad containing large quantities of sperm and no oocytes (PubMed:15342467, PubMed:15514056). The masculinization of the germline phenotype (also called the Mog phenotype) is likely due to altered activity of the translational repressor gld-1 in these mutants and the translational repression of 'feminizing' genes including tra-2 and rme-2 (PubMed:15342467). RNAi-mediated knockdown in both arms of the syncytial gonad of adult hermaphrodites results in the production of 95% fewer eggs than wild-type and of the eggs produced, all arrest during embryogenesis possibly due to cell division defcts (PubMed:11303786).</text>
</comment>
<comment type="similarity">
    <text evidence="9">Belongs to the ataxin-2 family.</text>
</comment>
<proteinExistence type="evidence at protein level"/>
<feature type="chain" id="PRO_0000439258" description="Ataxin-2 homolog" evidence="9">
    <location>
        <begin position="1"/>
        <end position="959"/>
    </location>
</feature>
<feature type="domain" description="Sm" evidence="1">
    <location>
        <begin position="13"/>
        <end position="92"/>
    </location>
</feature>
<feature type="region of interest" description="Disordered" evidence="2">
    <location>
        <begin position="203"/>
        <end position="378"/>
    </location>
</feature>
<feature type="region of interest" description="Disordered" evidence="2">
    <location>
        <begin position="392"/>
        <end position="484"/>
    </location>
</feature>
<feature type="region of interest" description="Disordered" evidence="2">
    <location>
        <begin position="501"/>
        <end position="528"/>
    </location>
</feature>
<feature type="region of interest" description="Disordered" evidence="2">
    <location>
        <begin position="697"/>
        <end position="831"/>
    </location>
</feature>
<feature type="region of interest" description="Disordered" evidence="2">
    <location>
        <begin position="867"/>
        <end position="959"/>
    </location>
</feature>
<feature type="compositionally biased region" description="Basic and acidic residues" evidence="2">
    <location>
        <begin position="226"/>
        <end position="235"/>
    </location>
</feature>
<feature type="compositionally biased region" description="Low complexity" evidence="2">
    <location>
        <begin position="246"/>
        <end position="260"/>
    </location>
</feature>
<feature type="compositionally biased region" description="Basic and acidic residues" evidence="2">
    <location>
        <begin position="270"/>
        <end position="281"/>
    </location>
</feature>
<feature type="compositionally biased region" description="Low complexity" evidence="2">
    <location>
        <begin position="282"/>
        <end position="313"/>
    </location>
</feature>
<feature type="compositionally biased region" description="Polar residues" evidence="2">
    <location>
        <begin position="341"/>
        <end position="356"/>
    </location>
</feature>
<feature type="compositionally biased region" description="Polar residues" evidence="2">
    <location>
        <begin position="473"/>
        <end position="484"/>
    </location>
</feature>
<feature type="compositionally biased region" description="Low complexity" evidence="2">
    <location>
        <begin position="504"/>
        <end position="528"/>
    </location>
</feature>
<feature type="compositionally biased region" description="Low complexity" evidence="2">
    <location>
        <begin position="697"/>
        <end position="707"/>
    </location>
</feature>
<feature type="compositionally biased region" description="Low complexity" evidence="2">
    <location>
        <begin position="715"/>
        <end position="725"/>
    </location>
</feature>
<feature type="compositionally biased region" description="Polar residues" evidence="2">
    <location>
        <begin position="726"/>
        <end position="742"/>
    </location>
</feature>
<feature type="compositionally biased region" description="Polar residues" evidence="2">
    <location>
        <begin position="756"/>
        <end position="765"/>
    </location>
</feature>
<feature type="compositionally biased region" description="Low complexity" evidence="2">
    <location>
        <begin position="766"/>
        <end position="788"/>
    </location>
</feature>
<feature type="compositionally biased region" description="Pro residues" evidence="2">
    <location>
        <begin position="789"/>
        <end position="798"/>
    </location>
</feature>
<feature type="compositionally biased region" description="Low complexity" evidence="2">
    <location>
        <begin position="822"/>
        <end position="831"/>
    </location>
</feature>
<feature type="compositionally biased region" description="Low complexity" evidence="2">
    <location>
        <begin position="867"/>
        <end position="876"/>
    </location>
</feature>
<feature type="compositionally biased region" description="Low complexity" evidence="2">
    <location>
        <begin position="902"/>
        <end position="911"/>
    </location>
</feature>
<feature type="compositionally biased region" description="Polar residues" evidence="2">
    <location>
        <begin position="912"/>
        <end position="922"/>
    </location>
</feature>
<feature type="compositionally biased region" description="Low complexity" evidence="2">
    <location>
        <begin position="923"/>
        <end position="935"/>
    </location>
</feature>
<feature type="compositionally biased region" description="Polar residues" evidence="2">
    <location>
        <begin position="948"/>
        <end position="959"/>
    </location>
</feature>
<feature type="splice variant" id="VSP_058818" description="In isoform b." evidence="9">
    <location>
        <begin position="1"/>
        <end position="325"/>
    </location>
</feature>
<feature type="splice variant" id="VSP_058819" description="In isoform c." evidence="9">
    <original>GVNP</original>
    <variation>ALKV</variation>
    <location>
        <begin position="927"/>
        <end position="930"/>
    </location>
</feature>
<feature type="splice variant" id="VSP_058820" description="In isoform c." evidence="9">
    <location>
        <begin position="931"/>
        <end position="959"/>
    </location>
</feature>
<sequence>MSTPTGLPALNGDVLSAINDMIGRVIIINTTDKKRYSGVLGAVSQDFDFGMQCVVEITKENENNLLRTESECRDKMVFHYSDIVDFAYVTQEIKKQHAVSKFVTDRQYHGDTPIEGEELQEWNGGEEDGLGGSIEDDVVVAGGQTAARRSNNHNNGTGWSVNDMFAANEKMNVVSTFKEDLTQYTTVEVVGTDEDRARAERLAREIESNSSSKFMANLENDDDERDLDKITRQEDFENGNGRKRNNNSFNQQQQQRRNPNIAPNGQPVNRRAEGLRGDRRNSGSSSANNSRYGAPAAAQQNYSQNQQQQQGQKGYRRQNEENDWQMAKGKGQNQGHDHSFRQQQKQMLDPRPNNNVKPADDKAQSATTATAAAGGSRVTDLKNWGNEFSIATAPKDQAPAVPAGNSGSAWNRGPPSSLVAKGSSNESTPPPTTNGEEAETKKEEAPSTSVDVAAAPVQNVQNDAEKHQEDDNVSVTSENDSVITSKSSSFKFNINAPEFKPRVAPATPTATTPVQNEYHPQQQPHPAMMAPQQGPPAPGMGMVPPHMGGPQNQGQPPMMMWQQTGQQQQGGGGYPQNHQFPIQHVPMQGVPGQMYGPGAATPVTVAQQPNQQHQVPTSAAGGQNHQLRDGEYREKQPLYMPYGPPQMVPVTSQQFYHSQYQGQMQQAAPYQMKMMPQQAPQGAYQQRYQQPQVYMMPPQGQQQQPRYQGPPPPQQQQQQQPQQQQFSGEQSRPQSHPNSQPTTPGPRGELPKMSGAPQNGNMQAESSSNASHSGSTSSQSGQRSGSPPGAVPPPPPPQQQHQQQQHPPHHAPPHVGAPPPQMMQQQQQHIQQYMVMQGPHQMHPQIPNYYQQPQQVFYPMIMPQQMPMQQNQHPQQSLMGERSDQGFPTSGYFDYRTMPNYQQQQQQQQQQMHRQNSLPQQFQGNQGVNPSGQQSGPPPPPPPSQQGTPRDQQHSQSPP</sequence>
<accession>G5ED29</accession>
<accession>B2D6K7</accession>
<accession>Q5FC83</accession>
<keyword id="KW-0025">Alternative splicing</keyword>
<keyword id="KW-0131">Cell cycle</keyword>
<keyword id="KW-0132">Cell division</keyword>
<keyword id="KW-0963">Cytoplasm</keyword>
<keyword id="KW-0539">Nucleus</keyword>
<keyword id="KW-1185">Reference proteome</keyword>
<keyword id="KW-0694">RNA-binding</keyword>
<gene>
    <name evidence="8 12" type="primary">atx-2</name>
    <name evidence="12" type="ORF">D2045.1</name>
</gene>
<dbReference type="EMBL" id="AY571963">
    <property type="protein sequence ID" value="AAS78587.1"/>
    <property type="molecule type" value="mRNA"/>
</dbReference>
<dbReference type="EMBL" id="BX284603">
    <property type="protein sequence ID" value="CAA84697.3"/>
    <property type="molecule type" value="Genomic_DNA"/>
</dbReference>
<dbReference type="EMBL" id="BX284603">
    <property type="protein sequence ID" value="CAI46560.1"/>
    <property type="molecule type" value="Genomic_DNA"/>
</dbReference>
<dbReference type="EMBL" id="BX284603">
    <property type="protein sequence ID" value="CAQ35032.1"/>
    <property type="molecule type" value="Genomic_DNA"/>
</dbReference>
<dbReference type="PIR" id="T20369">
    <property type="entry name" value="T20369"/>
</dbReference>
<dbReference type="RefSeq" id="NP_001021230.1">
    <property type="nucleotide sequence ID" value="NM_001026059.2"/>
</dbReference>
<dbReference type="RefSeq" id="NP_001021231.1">
    <property type="nucleotide sequence ID" value="NM_001026060.2"/>
</dbReference>
<dbReference type="RefSeq" id="NP_001122690.1">
    <property type="nucleotide sequence ID" value="NM_001129218.2"/>
</dbReference>
<dbReference type="SMR" id="G5ED29"/>
<dbReference type="FunCoup" id="G5ED29">
    <property type="interactions" value="266"/>
</dbReference>
<dbReference type="IntAct" id="G5ED29">
    <property type="interactions" value="1"/>
</dbReference>
<dbReference type="STRING" id="6239.D2045.1d.1"/>
<dbReference type="PaxDb" id="6239-D2045.1d"/>
<dbReference type="PeptideAtlas" id="G5ED29"/>
<dbReference type="EnsemblMetazoa" id="D2045.1a.1">
    <property type="protein sequence ID" value="D2045.1a.1"/>
    <property type="gene ID" value="WBGene00000231"/>
</dbReference>
<dbReference type="EnsemblMetazoa" id="D2045.1b.1">
    <property type="protein sequence ID" value="D2045.1b.1"/>
    <property type="gene ID" value="WBGene00000231"/>
</dbReference>
<dbReference type="EnsemblMetazoa" id="D2045.1c.1">
    <property type="protein sequence ID" value="D2045.1c.1"/>
    <property type="gene ID" value="WBGene00000231"/>
</dbReference>
<dbReference type="UCSC" id="D2045.1b.2">
    <property type="organism name" value="c. elegans"/>
</dbReference>
<dbReference type="AGR" id="WB:WBGene00000231"/>
<dbReference type="WormBase" id="D2045.1a">
    <molecule id="G5ED29-1"/>
    <property type="protein sequence ID" value="CE54206"/>
    <property type="gene ID" value="WBGene00000231"/>
    <property type="gene designation" value="atx-2"/>
</dbReference>
<dbReference type="WormBase" id="D2045.1b">
    <molecule id="G5ED29-2"/>
    <property type="protein sequence ID" value="CE54161"/>
    <property type="gene ID" value="WBGene00000231"/>
    <property type="gene designation" value="atx-2"/>
</dbReference>
<dbReference type="WormBase" id="D2045.1c">
    <molecule id="G5ED29-3"/>
    <property type="protein sequence ID" value="CE54097"/>
    <property type="gene ID" value="WBGene00000231"/>
    <property type="gene designation" value="atx-2"/>
</dbReference>
<dbReference type="eggNOG" id="KOG2375">
    <property type="taxonomic scope" value="Eukaryota"/>
</dbReference>
<dbReference type="GeneTree" id="ENSGT00940000174882"/>
<dbReference type="InParanoid" id="G5ED29"/>
<dbReference type="PRO" id="PR:G5ED29"/>
<dbReference type="Proteomes" id="UP000001940">
    <property type="component" value="Chromosome III"/>
</dbReference>
<dbReference type="Bgee" id="WBGene00000231">
    <property type="expression patterns" value="Expressed in pharyngeal muscle cell (C elegans) and 6 other cell types or tissues"/>
</dbReference>
<dbReference type="ExpressionAtlas" id="G5ED29">
    <property type="expression patterns" value="baseline and differential"/>
</dbReference>
<dbReference type="GO" id="GO:0005737">
    <property type="term" value="C:cytoplasm"/>
    <property type="evidence" value="ECO:0000314"/>
    <property type="project" value="UniProtKB"/>
</dbReference>
<dbReference type="GO" id="GO:0010494">
    <property type="term" value="C:cytoplasmic stress granule"/>
    <property type="evidence" value="ECO:0000318"/>
    <property type="project" value="GO_Central"/>
</dbReference>
<dbReference type="GO" id="GO:0005634">
    <property type="term" value="C:nucleus"/>
    <property type="evidence" value="ECO:0007669"/>
    <property type="project" value="UniProtKB-SubCell"/>
</dbReference>
<dbReference type="GO" id="GO:0003729">
    <property type="term" value="F:mRNA binding"/>
    <property type="evidence" value="ECO:0000318"/>
    <property type="project" value="GO_Central"/>
</dbReference>
<dbReference type="GO" id="GO:0030953">
    <property type="term" value="P:astral microtubule organization"/>
    <property type="evidence" value="ECO:0000315"/>
    <property type="project" value="UniProtKB"/>
</dbReference>
<dbReference type="GO" id="GO:0007059">
    <property type="term" value="P:chromosome segregation"/>
    <property type="evidence" value="ECO:0000315"/>
    <property type="project" value="UniProtKB"/>
</dbReference>
<dbReference type="GO" id="GO:0016048">
    <property type="term" value="P:detection of temperature stimulus"/>
    <property type="evidence" value="ECO:0000315"/>
    <property type="project" value="UniProtKB"/>
</dbReference>
<dbReference type="GO" id="GO:0040001">
    <property type="term" value="P:establishment of mitotic spindle localization"/>
    <property type="evidence" value="ECO:0000315"/>
    <property type="project" value="UniProtKB"/>
</dbReference>
<dbReference type="GO" id="GO:0008585">
    <property type="term" value="P:female gonad development"/>
    <property type="evidence" value="ECO:0000316"/>
    <property type="project" value="UniProtKB"/>
</dbReference>
<dbReference type="GO" id="GO:0051661">
    <property type="term" value="P:maintenance of centrosome location"/>
    <property type="evidence" value="ECO:0000315"/>
    <property type="project" value="UniProtKB"/>
</dbReference>
<dbReference type="GO" id="GO:0010826">
    <property type="term" value="P:negative regulation of centrosome duplication"/>
    <property type="evidence" value="ECO:0000315"/>
    <property type="project" value="UniProtKB"/>
</dbReference>
<dbReference type="GO" id="GO:0010629">
    <property type="term" value="P:negative regulation of gene expression"/>
    <property type="evidence" value="ECO:0000315"/>
    <property type="project" value="UniProtKB"/>
</dbReference>
<dbReference type="GO" id="GO:1905833">
    <property type="term" value="P:negative regulation of microtubule nucleation"/>
    <property type="evidence" value="ECO:0000315"/>
    <property type="project" value="UniProtKB"/>
</dbReference>
<dbReference type="GO" id="GO:1904780">
    <property type="term" value="P:negative regulation of protein localization to centrosome"/>
    <property type="evidence" value="ECO:0000315"/>
    <property type="project" value="UniProtKB"/>
</dbReference>
<dbReference type="GO" id="GO:0048599">
    <property type="term" value="P:oocyte development"/>
    <property type="evidence" value="ECO:0000316"/>
    <property type="project" value="UniProtKB"/>
</dbReference>
<dbReference type="GO" id="GO:0030716">
    <property type="term" value="P:oocyte fate determination"/>
    <property type="evidence" value="ECO:0000315"/>
    <property type="project" value="UniProtKB"/>
</dbReference>
<dbReference type="GO" id="GO:0040038">
    <property type="term" value="P:polar body extrusion after meiotic divisions"/>
    <property type="evidence" value="ECO:0000315"/>
    <property type="project" value="UniProtKB"/>
</dbReference>
<dbReference type="GO" id="GO:2000196">
    <property type="term" value="P:positive regulation of female gonad development"/>
    <property type="evidence" value="ECO:0000315"/>
    <property type="project" value="UniProtKB"/>
</dbReference>
<dbReference type="GO" id="GO:1905516">
    <property type="term" value="P:positive regulation of fertilization"/>
    <property type="evidence" value="ECO:0000316"/>
    <property type="project" value="UniProtKB"/>
</dbReference>
<dbReference type="GO" id="GO:0010628">
    <property type="term" value="P:positive regulation of gene expression"/>
    <property type="evidence" value="ECO:0000315"/>
    <property type="project" value="UniProtKB"/>
</dbReference>
<dbReference type="GO" id="GO:1905938">
    <property type="term" value="P:positive regulation of germ cell proliferation"/>
    <property type="evidence" value="ECO:0000315"/>
    <property type="project" value="UniProtKB"/>
</dbReference>
<dbReference type="GO" id="GO:0060903">
    <property type="term" value="P:positive regulation of meiosis I"/>
    <property type="evidence" value="ECO:0000316"/>
    <property type="project" value="UniProtKB"/>
</dbReference>
<dbReference type="GO" id="GO:0045977">
    <property type="term" value="P:positive regulation of mitotic cell cycle, embryonic"/>
    <property type="evidence" value="ECO:0000315"/>
    <property type="project" value="UniProtKB"/>
</dbReference>
<dbReference type="GO" id="GO:1903438">
    <property type="term" value="P:positive regulation of mitotic cytokinetic process"/>
    <property type="evidence" value="ECO:0000315"/>
    <property type="project" value="UniProtKB"/>
</dbReference>
<dbReference type="GO" id="GO:1902846">
    <property type="term" value="P:positive regulation of mitotic spindle elongation"/>
    <property type="evidence" value="ECO:0000315"/>
    <property type="project" value="UniProtKB"/>
</dbReference>
<dbReference type="GO" id="GO:0060282">
    <property type="term" value="P:positive regulation of oocyte development"/>
    <property type="evidence" value="ECO:0000315"/>
    <property type="project" value="UniProtKB"/>
</dbReference>
<dbReference type="GO" id="GO:0071539">
    <property type="term" value="P:protein localization to centrosome"/>
    <property type="evidence" value="ECO:0000316"/>
    <property type="project" value="UniProtKB"/>
</dbReference>
<dbReference type="GO" id="GO:0010824">
    <property type="term" value="P:regulation of centrosome duplication"/>
    <property type="evidence" value="ECO:0000316"/>
    <property type="project" value="UniProtKB"/>
</dbReference>
<dbReference type="GO" id="GO:0010468">
    <property type="term" value="P:regulation of gene expression"/>
    <property type="evidence" value="ECO:0000316"/>
    <property type="project" value="UniProtKB"/>
</dbReference>
<dbReference type="GO" id="GO:1905936">
    <property type="term" value="P:regulation of germ cell proliferation"/>
    <property type="evidence" value="ECO:0000316"/>
    <property type="project" value="UniProtKB"/>
</dbReference>
<dbReference type="GO" id="GO:0009794">
    <property type="term" value="P:regulation of mitotic cell cycle, embryonic"/>
    <property type="evidence" value="ECO:0000316"/>
    <property type="project" value="UniProtKB"/>
</dbReference>
<dbReference type="GO" id="GO:1903436">
    <property type="term" value="P:regulation of mitotic cytokinetic process"/>
    <property type="evidence" value="ECO:0000316"/>
    <property type="project" value="UniProtKB"/>
</dbReference>
<dbReference type="GO" id="GO:1904779">
    <property type="term" value="P:regulation of protein localization to centrosome"/>
    <property type="evidence" value="ECO:0000316"/>
    <property type="project" value="UniProtKB"/>
</dbReference>
<dbReference type="GO" id="GO:0090169">
    <property type="term" value="P:regulation of spindle assembly"/>
    <property type="evidence" value="ECO:0000316"/>
    <property type="project" value="UniProtKB"/>
</dbReference>
<dbReference type="GO" id="GO:0007283">
    <property type="term" value="P:spermatogenesis"/>
    <property type="evidence" value="ECO:0000316"/>
    <property type="project" value="UniProtKB"/>
</dbReference>
<dbReference type="GO" id="GO:0034063">
    <property type="term" value="P:stress granule assembly"/>
    <property type="evidence" value="ECO:0000318"/>
    <property type="project" value="GO_Central"/>
</dbReference>
<dbReference type="InterPro" id="IPR045117">
    <property type="entry name" value="ATXN2-like"/>
</dbReference>
<dbReference type="InterPro" id="IPR009604">
    <property type="entry name" value="LsmAD_domain"/>
</dbReference>
<dbReference type="InterPro" id="IPR047575">
    <property type="entry name" value="Sm"/>
</dbReference>
<dbReference type="InterPro" id="IPR025852">
    <property type="entry name" value="SM_dom_ATX"/>
</dbReference>
<dbReference type="PANTHER" id="PTHR12854">
    <property type="entry name" value="ATAXIN 2-RELATED"/>
    <property type="match status" value="1"/>
</dbReference>
<dbReference type="PANTHER" id="PTHR12854:SF7">
    <property type="entry name" value="ATAXIN-2 HOMOLOG"/>
    <property type="match status" value="1"/>
</dbReference>
<dbReference type="Pfam" id="PF14438">
    <property type="entry name" value="SM-ATX"/>
    <property type="match status" value="1"/>
</dbReference>
<dbReference type="SMART" id="SM01272">
    <property type="entry name" value="LsmAD"/>
    <property type="match status" value="1"/>
</dbReference>
<dbReference type="PROSITE" id="PS52002">
    <property type="entry name" value="SM"/>
    <property type="match status" value="1"/>
</dbReference>
<protein>
    <recommendedName>
        <fullName evidence="9">Ataxin-2 homolog</fullName>
    </recommendedName>
</protein>
<reference evidence="10" key="1">
    <citation type="journal article" date="2004" name="Genetics">
        <title>Caenorhabditis elegans atx-2 promotes germline proliferation and the oocyte fate.</title>
        <authorList>
            <person name="Maine E.M."/>
            <person name="Hansen D."/>
            <person name="Springer D."/>
            <person name="Vought V.E."/>
        </authorList>
    </citation>
    <scope>NUCLEOTIDE SEQUENCE [MRNA]</scope>
    <scope>FUNCTION</scope>
    <scope>DISRUPTION PHENOTYPE</scope>
</reference>
<reference evidence="11" key="2">
    <citation type="journal article" date="1998" name="Science">
        <title>Genome sequence of the nematode C. elegans: a platform for investigating biology.</title>
        <authorList>
            <consortium name="The C. elegans sequencing consortium"/>
        </authorList>
    </citation>
    <scope>NUCLEOTIDE SEQUENCE [LARGE SCALE GENOMIC DNA]</scope>
    <source>
        <strain evidence="11">Bristol N2</strain>
    </source>
</reference>
<reference evidence="9" key="3">
    <citation type="journal article" date="2000" name="J. Mol. Neurosci.">
        <title>The ortholog of human ataxin-2 is essential for early embryonic patterning in C. elegans.</title>
        <authorList>
            <person name="Kiehl T.R."/>
            <person name="Shibata H."/>
            <person name="Pulst S.M."/>
        </authorList>
    </citation>
    <scope>FUNCTION</scope>
    <scope>TISSUE SPECIFICITY</scope>
    <scope>DEVELOPMENTAL STAGE</scope>
    <scope>DISRUPTION PHENOTYPE</scope>
</reference>
<reference evidence="9" key="4">
    <citation type="journal article" date="2004" name="Development">
        <title>ATX-2, the C. elegans ortholog of ataxin 2, functions in translational regulation in the germline.</title>
        <authorList>
            <person name="Ciosk R."/>
            <person name="DePalma M."/>
            <person name="Priess J.R."/>
        </authorList>
    </citation>
    <scope>FUNCTION</scope>
    <scope>INTERACTION WITH PAB-1</scope>
    <scope>SUBCELLULAR LOCATION</scope>
    <scope>TISSUE SPECIFICITY</scope>
    <scope>DISRUPTION PHENOTYPE</scope>
</reference>
<reference evidence="9" key="5">
    <citation type="journal article" date="2016" name="Proc. Natl. Acad. Sci. U.S.A.">
        <title>Cell size and fat content of dietary-restricted Caenorhabditis elegans are regulated by ATX-2, an mTOR repressor.</title>
        <authorList>
            <person name="Bar D.Z."/>
            <person name="Charar C."/>
            <person name="Dorfman J."/>
            <person name="Yadid T."/>
            <person name="Tafforeau L."/>
            <person name="Lafontaine D.L."/>
            <person name="Gruenbaum Y."/>
        </authorList>
    </citation>
    <scope>FUNCTION</scope>
    <scope>INTERACTION WITH GDI-1</scope>
    <scope>SUBCELLULAR LOCATION</scope>
    <scope>DISRUPTION PHENOTYPE</scope>
</reference>
<reference evidence="9" key="6">
    <citation type="journal article" date="2016" name="PLoS Genet.">
        <title>ATX-2, the C. elegans ortholog of human Ataxin-2, regulates centrosome size and microtubule dynamics.</title>
        <authorList>
            <person name="Stubenvoll M.D."/>
            <person name="Medley J.C."/>
            <person name="Irwin M."/>
            <person name="Song M.H."/>
        </authorList>
    </citation>
    <scope>FUNCTION</scope>
    <scope>INTERACTION WITH SZY-20</scope>
    <scope>SUBCELLULAR LOCATION</scope>
    <scope>DOMAIN</scope>
    <scope>DISRUPTION PHENOTYPE</scope>
</reference>